<protein>
    <recommendedName>
        <fullName>Catalase-1/2</fullName>
        <ecNumber evidence="3">1.11.1.6</ecNumber>
    </recommendedName>
</protein>
<keyword id="KW-0963">Cytoplasm</keyword>
<keyword id="KW-0349">Heme</keyword>
<keyword id="KW-0376">Hydrogen peroxide</keyword>
<keyword id="KW-0408">Iron</keyword>
<keyword id="KW-0479">Metal-binding</keyword>
<keyword id="KW-0560">Oxidoreductase</keyword>
<keyword id="KW-0575">Peroxidase</keyword>
<keyword id="KW-0576">Peroxisome</keyword>
<keyword id="KW-1185">Reference proteome</keyword>
<evidence type="ECO:0000250" key="1">
    <source>
        <dbReference type="UniProtKB" id="P04040"/>
    </source>
</evidence>
<evidence type="ECO:0000250" key="2">
    <source>
        <dbReference type="UniProtKB" id="P25819"/>
    </source>
</evidence>
<evidence type="ECO:0000255" key="3">
    <source>
        <dbReference type="PROSITE-ProRule" id="PRU10013"/>
    </source>
</evidence>
<evidence type="ECO:0000305" key="4"/>
<proteinExistence type="evidence at transcript level"/>
<sequence>MDPYKNRPSSAFNSPFWTTNSGAPIWNNNSSLTVGSRGPILLEDYHLVEKLANFDRERIPERVVHARGASAKGFFEVTHDISHLTCADFLRAPGVQTPLIVRFSTVIHERGSPETLRDPRGFAVKFYTREGNFDLVGNNFPVFFVRDGLKFPDMVHALKPNPKSHIQENWRILDFFSHHPESLHMFSFLFDDVGIPQDYRHMDGFGVNTYTLINKAGKALYVKFHWKTTSGEKSLLDDEAIRVGGSNHSHATQDLYDSIAAGNYPEWKLYIQTLDPENEDRLDFDPLDVTKTWPEDVLPLQPVGRMVLNKNIDNFFAENEQLAFCPAIIVPGVYYSDDKLLQTRVFSYADTQRHRLGPNYLQLPANAPKCAHHNNHHDGFMNFMHRDEEVNYFPSRYDPVRHAEKVPVPPRILGGKREKCMIEKENNFKQPGERYRSWPSDRQERFVRRWVDALSDPRVTHEIRSIWISYWSQADRSLGQKIASHLNLKPSI</sequence>
<reference key="1">
    <citation type="journal article" date="1991" name="Plant Mol. Biol.">
        <title>Isolation and characterization of a pea catalase cDNA.</title>
        <authorList>
            <person name="Isin S.H."/>
            <person name="Allen R.D."/>
        </authorList>
    </citation>
    <scope>NUCLEOTIDE SEQUENCE</scope>
</reference>
<reference key="2">
    <citation type="submission" date="1997-11" db="EMBL/GenBank/DDBJ databases">
        <authorList>
            <person name="Su H."/>
            <person name="Hardy K.A."/>
            <person name="Hermsmeier D."/>
            <person name="Baum T.J."/>
        </authorList>
    </citation>
    <scope>NUCLEOTIDE SEQUENCE</scope>
    <source>
        <strain>cv. Corsoy 79</strain>
    </source>
</reference>
<comment type="function">
    <text evidence="1">Catalyzes the degradation of hydrogen peroxide (H(2)O(2)) generated by peroxisomal oxidases to water and oxygen, thereby protecting cells from the toxic effects of hydrogen peroxide.</text>
</comment>
<comment type="catalytic activity">
    <reaction evidence="3">
        <text>2 H2O2 = O2 + 2 H2O</text>
        <dbReference type="Rhea" id="RHEA:20309"/>
        <dbReference type="ChEBI" id="CHEBI:15377"/>
        <dbReference type="ChEBI" id="CHEBI:15379"/>
        <dbReference type="ChEBI" id="CHEBI:16240"/>
        <dbReference type="EC" id="1.11.1.6"/>
    </reaction>
</comment>
<comment type="cofactor">
    <cofactor evidence="1">
        <name>heme</name>
        <dbReference type="ChEBI" id="CHEBI:30413"/>
    </cofactor>
</comment>
<comment type="subunit">
    <text>Homotetramer.</text>
</comment>
<comment type="subcellular location">
    <subcellularLocation>
        <location evidence="2">Cytoplasm</location>
        <location evidence="2">Cytosol</location>
    </subcellularLocation>
    <subcellularLocation>
        <location evidence="2">Peroxisome matrix</location>
    </subcellularLocation>
</comment>
<comment type="similarity">
    <text evidence="4">Belongs to the catalase family.</text>
</comment>
<gene>
    <name type="primary">CAT1</name>
</gene>
<gene>
    <name type="primary">CAT2</name>
</gene>
<organism>
    <name type="scientific">Glycine max</name>
    <name type="common">Soybean</name>
    <name type="synonym">Glycine hispida</name>
    <dbReference type="NCBI Taxonomy" id="3847"/>
    <lineage>
        <taxon>Eukaryota</taxon>
        <taxon>Viridiplantae</taxon>
        <taxon>Streptophyta</taxon>
        <taxon>Embryophyta</taxon>
        <taxon>Tracheophyta</taxon>
        <taxon>Spermatophyta</taxon>
        <taxon>Magnoliopsida</taxon>
        <taxon>eudicotyledons</taxon>
        <taxon>Gunneridae</taxon>
        <taxon>Pentapetalae</taxon>
        <taxon>rosids</taxon>
        <taxon>fabids</taxon>
        <taxon>Fabales</taxon>
        <taxon>Fabaceae</taxon>
        <taxon>Papilionoideae</taxon>
        <taxon>50 kb inversion clade</taxon>
        <taxon>NPAAA clade</taxon>
        <taxon>indigoferoid/millettioid clade</taxon>
        <taxon>Phaseoleae</taxon>
        <taxon>Glycine</taxon>
        <taxon>Glycine subgen. Soja</taxon>
    </lineage>
</organism>
<accession>P29756</accession>
<feature type="chain" id="PRO_0000084963" description="Catalase-1/2">
    <location>
        <begin position="1"/>
        <end position="492"/>
    </location>
</feature>
<feature type="active site" evidence="3">
    <location>
        <position position="65"/>
    </location>
</feature>
<feature type="active site" evidence="3">
    <location>
        <position position="138"/>
    </location>
</feature>
<feature type="binding site" description="axial binding residue" evidence="1">
    <location>
        <position position="348"/>
    </location>
    <ligand>
        <name>heme</name>
        <dbReference type="ChEBI" id="CHEBI:30413"/>
    </ligand>
    <ligandPart>
        <name>Fe</name>
        <dbReference type="ChEBI" id="CHEBI:18248"/>
    </ligandPart>
</feature>
<name>CATA1_SOYBN</name>
<dbReference type="EC" id="1.11.1.6" evidence="3"/>
<dbReference type="EMBL" id="Z12021">
    <property type="protein sequence ID" value="CAA78056.1"/>
    <property type="molecule type" value="Genomic_DNA"/>
</dbReference>
<dbReference type="EMBL" id="AF035252">
    <property type="protein sequence ID" value="AAB88169.1"/>
    <property type="molecule type" value="mRNA"/>
</dbReference>
<dbReference type="EMBL" id="AF035253">
    <property type="protein sequence ID" value="AAB88170.1"/>
    <property type="molecule type" value="mRNA"/>
</dbReference>
<dbReference type="PIR" id="S20999">
    <property type="entry name" value="CSSY"/>
</dbReference>
<dbReference type="RefSeq" id="NP_001237556.1">
    <property type="nucleotide sequence ID" value="NM_001250627.1"/>
</dbReference>
<dbReference type="SMR" id="P29756"/>
<dbReference type="FunCoup" id="P29756">
    <property type="interactions" value="2996"/>
</dbReference>
<dbReference type="STRING" id="3847.P29756"/>
<dbReference type="PeroxiBase" id="6260">
    <property type="entry name" value="GmKat01"/>
</dbReference>
<dbReference type="PaxDb" id="3847-GLYMA17G38140.1"/>
<dbReference type="EnsemblPlants" id="KRH06008">
    <property type="protein sequence ID" value="KRH06008"/>
    <property type="gene ID" value="GLYMA_17G261700"/>
</dbReference>
<dbReference type="GeneID" id="547510"/>
<dbReference type="Gramene" id="KRH06008">
    <property type="protein sequence ID" value="KRH06008"/>
    <property type="gene ID" value="GLYMA_17G261700"/>
</dbReference>
<dbReference type="KEGG" id="gmx:547510"/>
<dbReference type="eggNOG" id="KOG0047">
    <property type="taxonomic scope" value="Eukaryota"/>
</dbReference>
<dbReference type="HOGENOM" id="CLU_010645_4_0_1"/>
<dbReference type="InParanoid" id="P29756"/>
<dbReference type="OMA" id="FYNQGAR"/>
<dbReference type="OrthoDB" id="6880011at2759"/>
<dbReference type="Proteomes" id="UP000008827">
    <property type="component" value="Chromosome 17"/>
</dbReference>
<dbReference type="GO" id="GO:0005737">
    <property type="term" value="C:cytoplasm"/>
    <property type="evidence" value="ECO:0000318"/>
    <property type="project" value="GO_Central"/>
</dbReference>
<dbReference type="GO" id="GO:0005829">
    <property type="term" value="C:cytosol"/>
    <property type="evidence" value="ECO:0007669"/>
    <property type="project" value="UniProtKB-SubCell"/>
</dbReference>
<dbReference type="GO" id="GO:0005782">
    <property type="term" value="C:peroxisomal matrix"/>
    <property type="evidence" value="ECO:0007669"/>
    <property type="project" value="UniProtKB-SubCell"/>
</dbReference>
<dbReference type="GO" id="GO:0005777">
    <property type="term" value="C:peroxisome"/>
    <property type="evidence" value="ECO:0000318"/>
    <property type="project" value="GO_Central"/>
</dbReference>
<dbReference type="GO" id="GO:0005886">
    <property type="term" value="C:plasma membrane"/>
    <property type="evidence" value="ECO:0000318"/>
    <property type="project" value="GO_Central"/>
</dbReference>
<dbReference type="GO" id="GO:0004096">
    <property type="term" value="F:catalase activity"/>
    <property type="evidence" value="ECO:0000318"/>
    <property type="project" value="GO_Central"/>
</dbReference>
<dbReference type="GO" id="GO:0020037">
    <property type="term" value="F:heme binding"/>
    <property type="evidence" value="ECO:0000318"/>
    <property type="project" value="GO_Central"/>
</dbReference>
<dbReference type="GO" id="GO:0046872">
    <property type="term" value="F:metal ion binding"/>
    <property type="evidence" value="ECO:0007669"/>
    <property type="project" value="UniProtKB-KW"/>
</dbReference>
<dbReference type="GO" id="GO:0042744">
    <property type="term" value="P:hydrogen peroxide catabolic process"/>
    <property type="evidence" value="ECO:0000318"/>
    <property type="project" value="GO_Central"/>
</dbReference>
<dbReference type="GO" id="GO:0042542">
    <property type="term" value="P:response to hydrogen peroxide"/>
    <property type="evidence" value="ECO:0000318"/>
    <property type="project" value="GO_Central"/>
</dbReference>
<dbReference type="CDD" id="cd08154">
    <property type="entry name" value="catalase_clade_1"/>
    <property type="match status" value="1"/>
</dbReference>
<dbReference type="FunFam" id="2.40.180.10:FF:000002">
    <property type="entry name" value="Catalase"/>
    <property type="match status" value="1"/>
</dbReference>
<dbReference type="Gene3D" id="2.40.180.10">
    <property type="entry name" value="Catalase core domain"/>
    <property type="match status" value="1"/>
</dbReference>
<dbReference type="InterPro" id="IPR018028">
    <property type="entry name" value="Catalase"/>
</dbReference>
<dbReference type="InterPro" id="IPR024708">
    <property type="entry name" value="Catalase_AS"/>
</dbReference>
<dbReference type="InterPro" id="IPR024711">
    <property type="entry name" value="Catalase_clade1/3"/>
</dbReference>
<dbReference type="InterPro" id="IPR011614">
    <property type="entry name" value="Catalase_core"/>
</dbReference>
<dbReference type="InterPro" id="IPR002226">
    <property type="entry name" value="Catalase_haem_BS"/>
</dbReference>
<dbReference type="InterPro" id="IPR010582">
    <property type="entry name" value="Catalase_immune_responsive"/>
</dbReference>
<dbReference type="InterPro" id="IPR020835">
    <property type="entry name" value="Catalase_sf"/>
</dbReference>
<dbReference type="PANTHER" id="PTHR11465">
    <property type="entry name" value="CATALASE"/>
    <property type="match status" value="1"/>
</dbReference>
<dbReference type="PANTHER" id="PTHR11465:SF23">
    <property type="entry name" value="CATALASE-2"/>
    <property type="match status" value="1"/>
</dbReference>
<dbReference type="Pfam" id="PF00199">
    <property type="entry name" value="Catalase"/>
    <property type="match status" value="1"/>
</dbReference>
<dbReference type="Pfam" id="PF06628">
    <property type="entry name" value="Catalase-rel"/>
    <property type="match status" value="1"/>
</dbReference>
<dbReference type="PIRSF" id="PIRSF038928">
    <property type="entry name" value="Catalase_clade1-3"/>
    <property type="match status" value="1"/>
</dbReference>
<dbReference type="PRINTS" id="PR00067">
    <property type="entry name" value="CATALASE"/>
</dbReference>
<dbReference type="SMART" id="SM01060">
    <property type="entry name" value="Catalase"/>
    <property type="match status" value="1"/>
</dbReference>
<dbReference type="SUPFAM" id="SSF56634">
    <property type="entry name" value="Heme-dependent catalase-like"/>
    <property type="match status" value="1"/>
</dbReference>
<dbReference type="PROSITE" id="PS00437">
    <property type="entry name" value="CATALASE_1"/>
    <property type="match status" value="1"/>
</dbReference>
<dbReference type="PROSITE" id="PS00438">
    <property type="entry name" value="CATALASE_2"/>
    <property type="match status" value="1"/>
</dbReference>
<dbReference type="PROSITE" id="PS51402">
    <property type="entry name" value="CATALASE_3"/>
    <property type="match status" value="1"/>
</dbReference>